<feature type="chain" id="PRO_0000232239" description="ATP-dependent RNA helicase mak5">
    <location>
        <begin position="1"/>
        <end position="648"/>
    </location>
</feature>
<feature type="domain" description="Helicase ATP-binding" evidence="2">
    <location>
        <begin position="153"/>
        <end position="331"/>
    </location>
</feature>
<feature type="domain" description="Helicase C-terminal" evidence="3">
    <location>
        <begin position="378"/>
        <end position="523"/>
    </location>
</feature>
<feature type="region of interest" description="Disordered" evidence="4">
    <location>
        <begin position="52"/>
        <end position="89"/>
    </location>
</feature>
<feature type="region of interest" description="Disordered" evidence="4">
    <location>
        <begin position="561"/>
        <end position="586"/>
    </location>
</feature>
<feature type="short sequence motif" description="Q motif">
    <location>
        <begin position="122"/>
        <end position="150"/>
    </location>
</feature>
<feature type="short sequence motif" description="DEAD box">
    <location>
        <begin position="275"/>
        <end position="278"/>
    </location>
</feature>
<feature type="compositionally biased region" description="Basic and acidic residues" evidence="4">
    <location>
        <begin position="52"/>
        <end position="76"/>
    </location>
</feature>
<feature type="compositionally biased region" description="Basic and acidic residues" evidence="4">
    <location>
        <begin position="573"/>
        <end position="582"/>
    </location>
</feature>
<feature type="binding site" evidence="2">
    <location>
        <begin position="166"/>
        <end position="173"/>
    </location>
    <ligand>
        <name>ATP</name>
        <dbReference type="ChEBI" id="CHEBI:30616"/>
    </ligand>
</feature>
<feature type="modified residue" description="Phosphoserine" evidence="5">
    <location>
        <position position="85"/>
    </location>
</feature>
<feature type="modified residue" description="Phosphoserine" evidence="5">
    <location>
        <position position="566"/>
    </location>
</feature>
<feature type="modified residue" description="Phosphoserine" evidence="5">
    <location>
        <position position="567"/>
    </location>
</feature>
<keyword id="KW-0067">ATP-binding</keyword>
<keyword id="KW-0347">Helicase</keyword>
<keyword id="KW-0378">Hydrolase</keyword>
<keyword id="KW-0547">Nucleotide-binding</keyword>
<keyword id="KW-0539">Nucleus</keyword>
<keyword id="KW-0597">Phosphoprotein</keyword>
<keyword id="KW-1185">Reference proteome</keyword>
<keyword id="KW-0690">Ribosome biogenesis</keyword>
<keyword id="KW-0694">RNA-binding</keyword>
<keyword id="KW-0698">rRNA processing</keyword>
<gene>
    <name type="primary">mak5</name>
    <name type="ORF">SPBC4F6.07c</name>
</gene>
<accession>O74393</accession>
<protein>
    <recommendedName>
        <fullName>ATP-dependent RNA helicase mak5</fullName>
        <ecNumber>3.6.4.13</ecNumber>
    </recommendedName>
</protein>
<comment type="function">
    <text evidence="1">ATP-binding RNA helicase involved in the biogenesis of 60S ribosomal subunits and is required for the normal formation of 25S and 5.8S rRNAs.</text>
</comment>
<comment type="catalytic activity">
    <reaction>
        <text>ATP + H2O = ADP + phosphate + H(+)</text>
        <dbReference type="Rhea" id="RHEA:13065"/>
        <dbReference type="ChEBI" id="CHEBI:15377"/>
        <dbReference type="ChEBI" id="CHEBI:15378"/>
        <dbReference type="ChEBI" id="CHEBI:30616"/>
        <dbReference type="ChEBI" id="CHEBI:43474"/>
        <dbReference type="ChEBI" id="CHEBI:456216"/>
        <dbReference type="EC" id="3.6.4.13"/>
    </reaction>
</comment>
<comment type="subcellular location">
    <subcellularLocation>
        <location evidence="1">Nucleus</location>
        <location evidence="1">Nucleolus</location>
    </subcellularLocation>
</comment>
<comment type="domain">
    <text>The Q motif is unique to and characteristic of the DEAD box family of RNA helicases and controls ATP binding and hydrolysis.</text>
</comment>
<comment type="similarity">
    <text evidence="6">Belongs to the DEAD box helicase family. DDX24/MAK5 subfamily.</text>
</comment>
<sequence>MPKKAALDELKWKEVKLPDHLDDFDGFMGLEEIEGVDIKYQPKGAMKEVIYELPEVHEKKDKKPEKRKKDQKEASEKKKKGKRTSPTIEMTSLGSKVTSKNYNEFSTLEEEDEHNSHGVDVSAWAHFSLSPEMLGSLSKAGFSKPMPIQSLVIPEASIGFDIIGKADTGSGKTLAFGIPILEHCLRNVDAKYVQALVVAPTRELAHQICQHFELIKPSPNIRVMSITGGLAVQKQQRLLNKHPHVVVATPGRLWSVINENNLTGNFKKIKCLVLDEADRLLQKSHFEELSKLLEILGNPMHTQRQTFIFSATFDEGLQQRLKKNMKGNITEKYNSPMENMLKEVRFFGKPKFLDANPQSAVASRVLEGLIECAPAEKDLYLYYLIMRYPGKTMVFANGIEDIKRITPFLNELKVPSYPLHAQLDQKKRLQSLEKFKNNPKGVLVCTDVAARGIDIPSVTHVIHYHVPHTADMYVHRSGRTARANEDGVSILMCGPKELSQLKRLCYRLKKKIETFINFPVDMSILDILKTRVVLAHKIVNLTRKDGRVGREEAWLKSMAQELGVESSDDEDPDLPKKSESSKNKKQIAHLRSELAPLLHEKIRTGFSGRYLTSGLVNMAEKLANEEVHDNIIGMDSISALEVLQKRKK</sequence>
<reference key="1">
    <citation type="journal article" date="2002" name="Nature">
        <title>The genome sequence of Schizosaccharomyces pombe.</title>
        <authorList>
            <person name="Wood V."/>
            <person name="Gwilliam R."/>
            <person name="Rajandream M.A."/>
            <person name="Lyne M.H."/>
            <person name="Lyne R."/>
            <person name="Stewart A."/>
            <person name="Sgouros J.G."/>
            <person name="Peat N."/>
            <person name="Hayles J."/>
            <person name="Baker S.G."/>
            <person name="Basham D."/>
            <person name="Bowman S."/>
            <person name="Brooks K."/>
            <person name="Brown D."/>
            <person name="Brown S."/>
            <person name="Chillingworth T."/>
            <person name="Churcher C.M."/>
            <person name="Collins M."/>
            <person name="Connor R."/>
            <person name="Cronin A."/>
            <person name="Davis P."/>
            <person name="Feltwell T."/>
            <person name="Fraser A."/>
            <person name="Gentles S."/>
            <person name="Goble A."/>
            <person name="Hamlin N."/>
            <person name="Harris D.E."/>
            <person name="Hidalgo J."/>
            <person name="Hodgson G."/>
            <person name="Holroyd S."/>
            <person name="Hornsby T."/>
            <person name="Howarth S."/>
            <person name="Huckle E.J."/>
            <person name="Hunt S."/>
            <person name="Jagels K."/>
            <person name="James K.D."/>
            <person name="Jones L."/>
            <person name="Jones M."/>
            <person name="Leather S."/>
            <person name="McDonald S."/>
            <person name="McLean J."/>
            <person name="Mooney P."/>
            <person name="Moule S."/>
            <person name="Mungall K.L."/>
            <person name="Murphy L.D."/>
            <person name="Niblett D."/>
            <person name="Odell C."/>
            <person name="Oliver K."/>
            <person name="O'Neil S."/>
            <person name="Pearson D."/>
            <person name="Quail M.A."/>
            <person name="Rabbinowitsch E."/>
            <person name="Rutherford K.M."/>
            <person name="Rutter S."/>
            <person name="Saunders D."/>
            <person name="Seeger K."/>
            <person name="Sharp S."/>
            <person name="Skelton J."/>
            <person name="Simmonds M.N."/>
            <person name="Squares R."/>
            <person name="Squares S."/>
            <person name="Stevens K."/>
            <person name="Taylor K."/>
            <person name="Taylor R.G."/>
            <person name="Tivey A."/>
            <person name="Walsh S.V."/>
            <person name="Warren T."/>
            <person name="Whitehead S."/>
            <person name="Woodward J.R."/>
            <person name="Volckaert G."/>
            <person name="Aert R."/>
            <person name="Robben J."/>
            <person name="Grymonprez B."/>
            <person name="Weltjens I."/>
            <person name="Vanstreels E."/>
            <person name="Rieger M."/>
            <person name="Schaefer M."/>
            <person name="Mueller-Auer S."/>
            <person name="Gabel C."/>
            <person name="Fuchs M."/>
            <person name="Duesterhoeft A."/>
            <person name="Fritzc C."/>
            <person name="Holzer E."/>
            <person name="Moestl D."/>
            <person name="Hilbert H."/>
            <person name="Borzym K."/>
            <person name="Langer I."/>
            <person name="Beck A."/>
            <person name="Lehrach H."/>
            <person name="Reinhardt R."/>
            <person name="Pohl T.M."/>
            <person name="Eger P."/>
            <person name="Zimmermann W."/>
            <person name="Wedler H."/>
            <person name="Wambutt R."/>
            <person name="Purnelle B."/>
            <person name="Goffeau A."/>
            <person name="Cadieu E."/>
            <person name="Dreano S."/>
            <person name="Gloux S."/>
            <person name="Lelaure V."/>
            <person name="Mottier S."/>
            <person name="Galibert F."/>
            <person name="Aves S.J."/>
            <person name="Xiang Z."/>
            <person name="Hunt C."/>
            <person name="Moore K."/>
            <person name="Hurst S.M."/>
            <person name="Lucas M."/>
            <person name="Rochet M."/>
            <person name="Gaillardin C."/>
            <person name="Tallada V.A."/>
            <person name="Garzon A."/>
            <person name="Thode G."/>
            <person name="Daga R.R."/>
            <person name="Cruzado L."/>
            <person name="Jimenez J."/>
            <person name="Sanchez M."/>
            <person name="del Rey F."/>
            <person name="Benito J."/>
            <person name="Dominguez A."/>
            <person name="Revuelta J.L."/>
            <person name="Moreno S."/>
            <person name="Armstrong J."/>
            <person name="Forsburg S.L."/>
            <person name="Cerutti L."/>
            <person name="Lowe T."/>
            <person name="McCombie W.R."/>
            <person name="Paulsen I."/>
            <person name="Potashkin J."/>
            <person name="Shpakovski G.V."/>
            <person name="Ussery D."/>
            <person name="Barrell B.G."/>
            <person name="Nurse P."/>
        </authorList>
    </citation>
    <scope>NUCLEOTIDE SEQUENCE [LARGE SCALE GENOMIC DNA]</scope>
    <source>
        <strain>972 / ATCC 24843</strain>
    </source>
</reference>
<reference key="2">
    <citation type="journal article" date="2008" name="J. Proteome Res.">
        <title>Phosphoproteome analysis of fission yeast.</title>
        <authorList>
            <person name="Wilson-Grady J.T."/>
            <person name="Villen J."/>
            <person name="Gygi S.P."/>
        </authorList>
    </citation>
    <scope>PHOSPHORYLATION [LARGE SCALE ANALYSIS] AT SER-85; SER-566 AND SER-567</scope>
    <scope>IDENTIFICATION BY MASS SPECTROMETRY</scope>
</reference>
<evidence type="ECO:0000250" key="1"/>
<evidence type="ECO:0000255" key="2">
    <source>
        <dbReference type="PROSITE-ProRule" id="PRU00541"/>
    </source>
</evidence>
<evidence type="ECO:0000255" key="3">
    <source>
        <dbReference type="PROSITE-ProRule" id="PRU00542"/>
    </source>
</evidence>
<evidence type="ECO:0000256" key="4">
    <source>
        <dbReference type="SAM" id="MobiDB-lite"/>
    </source>
</evidence>
<evidence type="ECO:0000269" key="5">
    <source>
    </source>
</evidence>
<evidence type="ECO:0000305" key="6"/>
<dbReference type="EC" id="3.6.4.13"/>
<dbReference type="EMBL" id="CU329671">
    <property type="protein sequence ID" value="CAA20727.1"/>
    <property type="molecule type" value="Genomic_DNA"/>
</dbReference>
<dbReference type="PIR" id="T40504">
    <property type="entry name" value="T40504"/>
</dbReference>
<dbReference type="RefSeq" id="NP_596107.1">
    <property type="nucleotide sequence ID" value="NM_001022024.2"/>
</dbReference>
<dbReference type="SMR" id="O74393"/>
<dbReference type="BioGRID" id="277391">
    <property type="interactions" value="4"/>
</dbReference>
<dbReference type="FunCoup" id="O74393">
    <property type="interactions" value="619"/>
</dbReference>
<dbReference type="STRING" id="284812.O74393"/>
<dbReference type="iPTMnet" id="O74393"/>
<dbReference type="PaxDb" id="4896-SPBC4F6.07c.1"/>
<dbReference type="EnsemblFungi" id="SPBC4F6.07c.1">
    <property type="protein sequence ID" value="SPBC4F6.07c.1:pep"/>
    <property type="gene ID" value="SPBC4F6.07c"/>
</dbReference>
<dbReference type="GeneID" id="2540874"/>
<dbReference type="KEGG" id="spo:2540874"/>
<dbReference type="PomBase" id="SPBC4F6.07c">
    <property type="gene designation" value="mak5"/>
</dbReference>
<dbReference type="VEuPathDB" id="FungiDB:SPBC4F6.07c"/>
<dbReference type="eggNOG" id="KOG0347">
    <property type="taxonomic scope" value="Eukaryota"/>
</dbReference>
<dbReference type="HOGENOM" id="CLU_003041_13_0_1"/>
<dbReference type="InParanoid" id="O74393"/>
<dbReference type="OMA" id="QMIQKAR"/>
<dbReference type="PhylomeDB" id="O74393"/>
<dbReference type="PRO" id="PR:O74393"/>
<dbReference type="Proteomes" id="UP000002485">
    <property type="component" value="Chromosome II"/>
</dbReference>
<dbReference type="GO" id="GO:0005730">
    <property type="term" value="C:nucleolus"/>
    <property type="evidence" value="ECO:0007005"/>
    <property type="project" value="PomBase"/>
</dbReference>
<dbReference type="GO" id="GO:0005634">
    <property type="term" value="C:nucleus"/>
    <property type="evidence" value="ECO:0007005"/>
    <property type="project" value="PomBase"/>
</dbReference>
<dbReference type="GO" id="GO:0005524">
    <property type="term" value="F:ATP binding"/>
    <property type="evidence" value="ECO:0007669"/>
    <property type="project" value="UniProtKB-KW"/>
</dbReference>
<dbReference type="GO" id="GO:0016887">
    <property type="term" value="F:ATP hydrolysis activity"/>
    <property type="evidence" value="ECO:0007669"/>
    <property type="project" value="RHEA"/>
</dbReference>
<dbReference type="GO" id="GO:0003723">
    <property type="term" value="F:RNA binding"/>
    <property type="evidence" value="ECO:0007669"/>
    <property type="project" value="UniProtKB-KW"/>
</dbReference>
<dbReference type="GO" id="GO:0003724">
    <property type="term" value="F:RNA helicase activity"/>
    <property type="evidence" value="ECO:0000250"/>
    <property type="project" value="PomBase"/>
</dbReference>
<dbReference type="GO" id="GO:0042254">
    <property type="term" value="P:ribosome biogenesis"/>
    <property type="evidence" value="ECO:0000250"/>
    <property type="project" value="PomBase"/>
</dbReference>
<dbReference type="GO" id="GO:0006364">
    <property type="term" value="P:rRNA processing"/>
    <property type="evidence" value="ECO:0007669"/>
    <property type="project" value="UniProtKB-KW"/>
</dbReference>
<dbReference type="CDD" id="cd17946">
    <property type="entry name" value="DEADc_DDX24"/>
    <property type="match status" value="1"/>
</dbReference>
<dbReference type="CDD" id="cd18787">
    <property type="entry name" value="SF2_C_DEAD"/>
    <property type="match status" value="1"/>
</dbReference>
<dbReference type="FunFam" id="3.40.50.300:FF:001059">
    <property type="entry name" value="ATP-dependent RNA helicase DDX24"/>
    <property type="match status" value="1"/>
</dbReference>
<dbReference type="FunFam" id="3.40.50.300:FF:001593">
    <property type="entry name" value="ATP-dependent RNA helicase DDX24"/>
    <property type="match status" value="1"/>
</dbReference>
<dbReference type="Gene3D" id="3.40.50.300">
    <property type="entry name" value="P-loop containing nucleotide triphosphate hydrolases"/>
    <property type="match status" value="2"/>
</dbReference>
<dbReference type="InterPro" id="IPR011545">
    <property type="entry name" value="DEAD/DEAH_box_helicase_dom"/>
</dbReference>
<dbReference type="InterPro" id="IPR050079">
    <property type="entry name" value="DEAD_box_RNA_helicase"/>
</dbReference>
<dbReference type="InterPro" id="IPR014001">
    <property type="entry name" value="Helicase_ATP-bd"/>
</dbReference>
<dbReference type="InterPro" id="IPR001650">
    <property type="entry name" value="Helicase_C-like"/>
</dbReference>
<dbReference type="InterPro" id="IPR027417">
    <property type="entry name" value="P-loop_NTPase"/>
</dbReference>
<dbReference type="InterPro" id="IPR000629">
    <property type="entry name" value="RNA-helicase_DEAD-box_CS"/>
</dbReference>
<dbReference type="InterPro" id="IPR014014">
    <property type="entry name" value="RNA_helicase_DEAD_Q_motif"/>
</dbReference>
<dbReference type="PANTHER" id="PTHR47959:SF1">
    <property type="entry name" value="ATP-DEPENDENT RNA HELICASE DBPA"/>
    <property type="match status" value="1"/>
</dbReference>
<dbReference type="PANTHER" id="PTHR47959">
    <property type="entry name" value="ATP-DEPENDENT RNA HELICASE RHLE-RELATED"/>
    <property type="match status" value="1"/>
</dbReference>
<dbReference type="Pfam" id="PF00270">
    <property type="entry name" value="DEAD"/>
    <property type="match status" value="1"/>
</dbReference>
<dbReference type="Pfam" id="PF00271">
    <property type="entry name" value="Helicase_C"/>
    <property type="match status" value="1"/>
</dbReference>
<dbReference type="SMART" id="SM00487">
    <property type="entry name" value="DEXDc"/>
    <property type="match status" value="1"/>
</dbReference>
<dbReference type="SMART" id="SM00490">
    <property type="entry name" value="HELICc"/>
    <property type="match status" value="1"/>
</dbReference>
<dbReference type="SUPFAM" id="SSF52540">
    <property type="entry name" value="P-loop containing nucleoside triphosphate hydrolases"/>
    <property type="match status" value="1"/>
</dbReference>
<dbReference type="PROSITE" id="PS00039">
    <property type="entry name" value="DEAD_ATP_HELICASE"/>
    <property type="match status" value="1"/>
</dbReference>
<dbReference type="PROSITE" id="PS51192">
    <property type="entry name" value="HELICASE_ATP_BIND_1"/>
    <property type="match status" value="1"/>
</dbReference>
<dbReference type="PROSITE" id="PS51194">
    <property type="entry name" value="HELICASE_CTER"/>
    <property type="match status" value="1"/>
</dbReference>
<dbReference type="PROSITE" id="PS51195">
    <property type="entry name" value="Q_MOTIF"/>
    <property type="match status" value="1"/>
</dbReference>
<proteinExistence type="evidence at protein level"/>
<organism>
    <name type="scientific">Schizosaccharomyces pombe (strain 972 / ATCC 24843)</name>
    <name type="common">Fission yeast</name>
    <dbReference type="NCBI Taxonomy" id="284812"/>
    <lineage>
        <taxon>Eukaryota</taxon>
        <taxon>Fungi</taxon>
        <taxon>Dikarya</taxon>
        <taxon>Ascomycota</taxon>
        <taxon>Taphrinomycotina</taxon>
        <taxon>Schizosaccharomycetes</taxon>
        <taxon>Schizosaccharomycetales</taxon>
        <taxon>Schizosaccharomycetaceae</taxon>
        <taxon>Schizosaccharomyces</taxon>
    </lineage>
</organism>
<name>MAK5_SCHPO</name>